<gene>
    <name evidence="1" type="primary">proS</name>
    <name type="ordered locus">rrnAC0166</name>
</gene>
<feature type="chain" id="PRO_0000249156" description="Proline--tRNA ligase">
    <location>
        <begin position="1"/>
        <end position="484"/>
    </location>
</feature>
<comment type="function">
    <text evidence="1">Catalyzes the attachment of proline to tRNA(Pro) in a two-step reaction: proline is first activated by ATP to form Pro-AMP and then transferred to the acceptor end of tRNA(Pro).</text>
</comment>
<comment type="catalytic activity">
    <reaction evidence="1">
        <text>tRNA(Pro) + L-proline + ATP = L-prolyl-tRNA(Pro) + AMP + diphosphate</text>
        <dbReference type="Rhea" id="RHEA:14305"/>
        <dbReference type="Rhea" id="RHEA-COMP:9700"/>
        <dbReference type="Rhea" id="RHEA-COMP:9702"/>
        <dbReference type="ChEBI" id="CHEBI:30616"/>
        <dbReference type="ChEBI" id="CHEBI:33019"/>
        <dbReference type="ChEBI" id="CHEBI:60039"/>
        <dbReference type="ChEBI" id="CHEBI:78442"/>
        <dbReference type="ChEBI" id="CHEBI:78532"/>
        <dbReference type="ChEBI" id="CHEBI:456215"/>
        <dbReference type="EC" id="6.1.1.15"/>
    </reaction>
</comment>
<comment type="subunit">
    <text evidence="1">Homodimer.</text>
</comment>
<comment type="subcellular location">
    <subcellularLocation>
        <location evidence="1">Cytoplasm</location>
    </subcellularLocation>
</comment>
<comment type="domain">
    <text evidence="1">Consists of three domains: the N-terminal catalytic domain, the anticodon-binding domain and the C-terminal extension.</text>
</comment>
<comment type="similarity">
    <text evidence="1">Belongs to the class-II aminoacyl-tRNA synthetase family. ProS type 3 subfamily.</text>
</comment>
<dbReference type="EC" id="6.1.1.15" evidence="1"/>
<dbReference type="EMBL" id="AY596297">
    <property type="protein sequence ID" value="AAV45232.1"/>
    <property type="molecule type" value="Genomic_DNA"/>
</dbReference>
<dbReference type="RefSeq" id="WP_011222859.1">
    <property type="nucleotide sequence ID" value="NC_006396.1"/>
</dbReference>
<dbReference type="SMR" id="Q5V5H0"/>
<dbReference type="STRING" id="272569.rrnAC0166"/>
<dbReference type="PaxDb" id="272569-rrnAC0166"/>
<dbReference type="EnsemblBacteria" id="AAV45232">
    <property type="protein sequence ID" value="AAV45232"/>
    <property type="gene ID" value="rrnAC0166"/>
</dbReference>
<dbReference type="GeneID" id="40154468"/>
<dbReference type="KEGG" id="hma:rrnAC0166"/>
<dbReference type="PATRIC" id="fig|272569.17.peg.964"/>
<dbReference type="eggNOG" id="arCOG00402">
    <property type="taxonomic scope" value="Archaea"/>
</dbReference>
<dbReference type="HOGENOM" id="CLU_001882_4_2_2"/>
<dbReference type="Proteomes" id="UP000001169">
    <property type="component" value="Chromosome I"/>
</dbReference>
<dbReference type="GO" id="GO:0017101">
    <property type="term" value="C:aminoacyl-tRNA synthetase multienzyme complex"/>
    <property type="evidence" value="ECO:0007669"/>
    <property type="project" value="TreeGrafter"/>
</dbReference>
<dbReference type="GO" id="GO:0005737">
    <property type="term" value="C:cytoplasm"/>
    <property type="evidence" value="ECO:0007669"/>
    <property type="project" value="UniProtKB-SubCell"/>
</dbReference>
<dbReference type="GO" id="GO:0005524">
    <property type="term" value="F:ATP binding"/>
    <property type="evidence" value="ECO:0007669"/>
    <property type="project" value="UniProtKB-UniRule"/>
</dbReference>
<dbReference type="GO" id="GO:0004827">
    <property type="term" value="F:proline-tRNA ligase activity"/>
    <property type="evidence" value="ECO:0007669"/>
    <property type="project" value="UniProtKB-UniRule"/>
</dbReference>
<dbReference type="GO" id="GO:0006433">
    <property type="term" value="P:prolyl-tRNA aminoacylation"/>
    <property type="evidence" value="ECO:0007669"/>
    <property type="project" value="UniProtKB-UniRule"/>
</dbReference>
<dbReference type="CDD" id="cd00862">
    <property type="entry name" value="ProRS_anticodon_zinc"/>
    <property type="match status" value="1"/>
</dbReference>
<dbReference type="CDD" id="cd00778">
    <property type="entry name" value="ProRS_core_arch_euk"/>
    <property type="match status" value="1"/>
</dbReference>
<dbReference type="FunFam" id="3.30.930.10:FF:000037">
    <property type="entry name" value="Proline--tRNA ligase"/>
    <property type="match status" value="1"/>
</dbReference>
<dbReference type="Gene3D" id="3.40.50.800">
    <property type="entry name" value="Anticodon-binding domain"/>
    <property type="match status" value="1"/>
</dbReference>
<dbReference type="Gene3D" id="3.30.930.10">
    <property type="entry name" value="Bira Bifunctional Protein, Domain 2"/>
    <property type="match status" value="1"/>
</dbReference>
<dbReference type="Gene3D" id="3.30.110.30">
    <property type="entry name" value="C-terminal domain of ProRS"/>
    <property type="match status" value="1"/>
</dbReference>
<dbReference type="HAMAP" id="MF_01571">
    <property type="entry name" value="Pro_tRNA_synth_type3"/>
    <property type="match status" value="1"/>
</dbReference>
<dbReference type="InterPro" id="IPR002314">
    <property type="entry name" value="aa-tRNA-synt_IIb"/>
</dbReference>
<dbReference type="InterPro" id="IPR006195">
    <property type="entry name" value="aa-tRNA-synth_II"/>
</dbReference>
<dbReference type="InterPro" id="IPR045864">
    <property type="entry name" value="aa-tRNA-synth_II/BPL/LPL"/>
</dbReference>
<dbReference type="InterPro" id="IPR004154">
    <property type="entry name" value="Anticodon-bd"/>
</dbReference>
<dbReference type="InterPro" id="IPR036621">
    <property type="entry name" value="Anticodon-bd_dom_sf"/>
</dbReference>
<dbReference type="InterPro" id="IPR002316">
    <property type="entry name" value="Pro-tRNA-ligase_IIa"/>
</dbReference>
<dbReference type="InterPro" id="IPR004499">
    <property type="entry name" value="Pro-tRNA-ligase_IIa_arc-type"/>
</dbReference>
<dbReference type="InterPro" id="IPR016061">
    <property type="entry name" value="Pro-tRNA_ligase_II_C"/>
</dbReference>
<dbReference type="InterPro" id="IPR017449">
    <property type="entry name" value="Pro-tRNA_synth_II"/>
</dbReference>
<dbReference type="InterPro" id="IPR033721">
    <property type="entry name" value="ProRS_core_arch_euk"/>
</dbReference>
<dbReference type="NCBIfam" id="TIGR00408">
    <property type="entry name" value="proS_fam_I"/>
    <property type="match status" value="1"/>
</dbReference>
<dbReference type="PANTHER" id="PTHR43382:SF2">
    <property type="entry name" value="BIFUNCTIONAL GLUTAMATE_PROLINE--TRNA LIGASE"/>
    <property type="match status" value="1"/>
</dbReference>
<dbReference type="PANTHER" id="PTHR43382">
    <property type="entry name" value="PROLYL-TRNA SYNTHETASE"/>
    <property type="match status" value="1"/>
</dbReference>
<dbReference type="Pfam" id="PF03129">
    <property type="entry name" value="HGTP_anticodon"/>
    <property type="match status" value="1"/>
</dbReference>
<dbReference type="Pfam" id="PF09180">
    <property type="entry name" value="ProRS-C_1"/>
    <property type="match status" value="1"/>
</dbReference>
<dbReference type="Pfam" id="PF00587">
    <property type="entry name" value="tRNA-synt_2b"/>
    <property type="match status" value="1"/>
</dbReference>
<dbReference type="PRINTS" id="PR01046">
    <property type="entry name" value="TRNASYNTHPRO"/>
</dbReference>
<dbReference type="SMART" id="SM00946">
    <property type="entry name" value="ProRS-C_1"/>
    <property type="match status" value="1"/>
</dbReference>
<dbReference type="SUPFAM" id="SSF64586">
    <property type="entry name" value="C-terminal domain of ProRS"/>
    <property type="match status" value="1"/>
</dbReference>
<dbReference type="SUPFAM" id="SSF52954">
    <property type="entry name" value="Class II aaRS ABD-related"/>
    <property type="match status" value="1"/>
</dbReference>
<dbReference type="SUPFAM" id="SSF55681">
    <property type="entry name" value="Class II aaRS and biotin synthetases"/>
    <property type="match status" value="1"/>
</dbReference>
<dbReference type="PROSITE" id="PS50862">
    <property type="entry name" value="AA_TRNA_LIGASE_II"/>
    <property type="match status" value="1"/>
</dbReference>
<reference key="1">
    <citation type="journal article" date="2004" name="Genome Res.">
        <title>Genome sequence of Haloarcula marismortui: a halophilic archaeon from the Dead Sea.</title>
        <authorList>
            <person name="Baliga N.S."/>
            <person name="Bonneau R."/>
            <person name="Facciotti M.T."/>
            <person name="Pan M."/>
            <person name="Glusman G."/>
            <person name="Deutsch E.W."/>
            <person name="Shannon P."/>
            <person name="Chiu Y."/>
            <person name="Weng R.S."/>
            <person name="Gan R.R."/>
            <person name="Hung P."/>
            <person name="Date S.V."/>
            <person name="Marcotte E."/>
            <person name="Hood L."/>
            <person name="Ng W.V."/>
        </authorList>
    </citation>
    <scope>NUCLEOTIDE SEQUENCE [LARGE SCALE GENOMIC DNA]</scope>
    <source>
        <strain>ATCC 43049 / DSM 3752 / JCM 8966 / VKM B-1809</strain>
    </source>
</reference>
<name>SYP_HALMA</name>
<sequence length="484" mass="54485">MSGEQELGITESKEHSPGEWYAEVVQKAGLADYAPMGGFIVTRPRGYAIWERIQNNLDGWFKDTGVQNAYFPLFIPESYLEKEKDVVEGFDPEVAWVTHGGHNELEERLAVRPTSESIIAPFMAQWTRSHRDLPMRLNQWCSVVRWEATETKPFFRTKEFLWQEGHTAHADEDGAWEETMTRLDQYARLYEEVMAMPPLKGRKPPHDKFPGAHTTTTIETLMPDGKTVQAATSHYLGTSFGEAFDITYADADEEENTAHTTSWGLSWRAMGALIMTHSDDQGLVLPPALAPDQVVVVPIWQEDNKDEVIDYAADLAAELDEADVRVELDDREHRNPGFKYNEHELHGVPLRVEIGPHEVEDGEATLVHRPDGETETVDRDGIADTVTDHLDTVHAKLYASAEETLEGEIREAESREEILGTIGQHGGYVKCGWCGDEDCEEPIKDAIAAEIVMVPLDRDEEPIHEDCAICGEDAEETAYFAKSY</sequence>
<evidence type="ECO:0000255" key="1">
    <source>
        <dbReference type="HAMAP-Rule" id="MF_01571"/>
    </source>
</evidence>
<organism>
    <name type="scientific">Haloarcula marismortui (strain ATCC 43049 / DSM 3752 / JCM 8966 / VKM B-1809)</name>
    <name type="common">Halobacterium marismortui</name>
    <dbReference type="NCBI Taxonomy" id="272569"/>
    <lineage>
        <taxon>Archaea</taxon>
        <taxon>Methanobacteriati</taxon>
        <taxon>Methanobacteriota</taxon>
        <taxon>Stenosarchaea group</taxon>
        <taxon>Halobacteria</taxon>
        <taxon>Halobacteriales</taxon>
        <taxon>Haloarculaceae</taxon>
        <taxon>Haloarcula</taxon>
    </lineage>
</organism>
<keyword id="KW-0030">Aminoacyl-tRNA synthetase</keyword>
<keyword id="KW-0067">ATP-binding</keyword>
<keyword id="KW-0963">Cytoplasm</keyword>
<keyword id="KW-0436">Ligase</keyword>
<keyword id="KW-0547">Nucleotide-binding</keyword>
<keyword id="KW-0648">Protein biosynthesis</keyword>
<keyword id="KW-1185">Reference proteome</keyword>
<protein>
    <recommendedName>
        <fullName evidence="1">Proline--tRNA ligase</fullName>
        <ecNumber evidence="1">6.1.1.15</ecNumber>
    </recommendedName>
    <alternativeName>
        <fullName evidence="1">Prolyl-tRNA synthetase</fullName>
        <shortName evidence="1">ProRS</shortName>
    </alternativeName>
</protein>
<accession>Q5V5H0</accession>
<proteinExistence type="inferred from homology"/>